<dbReference type="EMBL" id="AM181176">
    <property type="protein sequence ID" value="CAY50310.1"/>
    <property type="molecule type" value="Genomic_DNA"/>
</dbReference>
<dbReference type="RefSeq" id="WP_003238279.1">
    <property type="nucleotide sequence ID" value="NC_012660.1"/>
</dbReference>
<dbReference type="SMR" id="C3JYJ9"/>
<dbReference type="STRING" id="294.SRM1_03535"/>
<dbReference type="GeneID" id="97921031"/>
<dbReference type="eggNOG" id="COG1219">
    <property type="taxonomic scope" value="Bacteria"/>
</dbReference>
<dbReference type="HOGENOM" id="CLU_014218_8_2_6"/>
<dbReference type="OrthoDB" id="9804062at2"/>
<dbReference type="GO" id="GO:0009376">
    <property type="term" value="C:HslUV protease complex"/>
    <property type="evidence" value="ECO:0007669"/>
    <property type="project" value="TreeGrafter"/>
</dbReference>
<dbReference type="GO" id="GO:0005524">
    <property type="term" value="F:ATP binding"/>
    <property type="evidence" value="ECO:0007669"/>
    <property type="project" value="UniProtKB-UniRule"/>
</dbReference>
<dbReference type="GO" id="GO:0016887">
    <property type="term" value="F:ATP hydrolysis activity"/>
    <property type="evidence" value="ECO:0007669"/>
    <property type="project" value="InterPro"/>
</dbReference>
<dbReference type="GO" id="GO:0140662">
    <property type="term" value="F:ATP-dependent protein folding chaperone"/>
    <property type="evidence" value="ECO:0007669"/>
    <property type="project" value="InterPro"/>
</dbReference>
<dbReference type="GO" id="GO:0046983">
    <property type="term" value="F:protein dimerization activity"/>
    <property type="evidence" value="ECO:0007669"/>
    <property type="project" value="InterPro"/>
</dbReference>
<dbReference type="GO" id="GO:0051082">
    <property type="term" value="F:unfolded protein binding"/>
    <property type="evidence" value="ECO:0007669"/>
    <property type="project" value="UniProtKB-UniRule"/>
</dbReference>
<dbReference type="GO" id="GO:0008270">
    <property type="term" value="F:zinc ion binding"/>
    <property type="evidence" value="ECO:0007669"/>
    <property type="project" value="InterPro"/>
</dbReference>
<dbReference type="GO" id="GO:0051301">
    <property type="term" value="P:cell division"/>
    <property type="evidence" value="ECO:0007669"/>
    <property type="project" value="TreeGrafter"/>
</dbReference>
<dbReference type="GO" id="GO:0051603">
    <property type="term" value="P:proteolysis involved in protein catabolic process"/>
    <property type="evidence" value="ECO:0007669"/>
    <property type="project" value="TreeGrafter"/>
</dbReference>
<dbReference type="CDD" id="cd19497">
    <property type="entry name" value="RecA-like_ClpX"/>
    <property type="match status" value="1"/>
</dbReference>
<dbReference type="FunFam" id="1.10.8.60:FF:000002">
    <property type="entry name" value="ATP-dependent Clp protease ATP-binding subunit ClpX"/>
    <property type="match status" value="1"/>
</dbReference>
<dbReference type="FunFam" id="3.40.50.300:FF:000005">
    <property type="entry name" value="ATP-dependent Clp protease ATP-binding subunit ClpX"/>
    <property type="match status" value="1"/>
</dbReference>
<dbReference type="Gene3D" id="1.10.8.60">
    <property type="match status" value="1"/>
</dbReference>
<dbReference type="Gene3D" id="6.20.220.10">
    <property type="entry name" value="ClpX chaperone, C4-type zinc finger domain"/>
    <property type="match status" value="1"/>
</dbReference>
<dbReference type="Gene3D" id="3.40.50.300">
    <property type="entry name" value="P-loop containing nucleotide triphosphate hydrolases"/>
    <property type="match status" value="1"/>
</dbReference>
<dbReference type="HAMAP" id="MF_00175">
    <property type="entry name" value="ClpX"/>
    <property type="match status" value="1"/>
</dbReference>
<dbReference type="InterPro" id="IPR003593">
    <property type="entry name" value="AAA+_ATPase"/>
</dbReference>
<dbReference type="InterPro" id="IPR050052">
    <property type="entry name" value="ATP-dep_Clp_protease_ClpX"/>
</dbReference>
<dbReference type="InterPro" id="IPR003959">
    <property type="entry name" value="ATPase_AAA_core"/>
</dbReference>
<dbReference type="InterPro" id="IPR019489">
    <property type="entry name" value="Clp_ATPase_C"/>
</dbReference>
<dbReference type="InterPro" id="IPR004487">
    <property type="entry name" value="Clp_protease_ATP-bd_su_ClpX"/>
</dbReference>
<dbReference type="InterPro" id="IPR046425">
    <property type="entry name" value="ClpX_bact"/>
</dbReference>
<dbReference type="InterPro" id="IPR027417">
    <property type="entry name" value="P-loop_NTPase"/>
</dbReference>
<dbReference type="InterPro" id="IPR010603">
    <property type="entry name" value="Znf_CppX_C4"/>
</dbReference>
<dbReference type="InterPro" id="IPR038366">
    <property type="entry name" value="Znf_CppX_C4_sf"/>
</dbReference>
<dbReference type="NCBIfam" id="TIGR00382">
    <property type="entry name" value="clpX"/>
    <property type="match status" value="1"/>
</dbReference>
<dbReference type="NCBIfam" id="NF003745">
    <property type="entry name" value="PRK05342.1"/>
    <property type="match status" value="1"/>
</dbReference>
<dbReference type="PANTHER" id="PTHR48102:SF7">
    <property type="entry name" value="ATP-DEPENDENT CLP PROTEASE ATP-BINDING SUBUNIT CLPX-LIKE, MITOCHONDRIAL"/>
    <property type="match status" value="1"/>
</dbReference>
<dbReference type="PANTHER" id="PTHR48102">
    <property type="entry name" value="ATP-DEPENDENT CLP PROTEASE ATP-BINDING SUBUNIT CLPX-LIKE, MITOCHONDRIAL-RELATED"/>
    <property type="match status" value="1"/>
</dbReference>
<dbReference type="Pfam" id="PF07724">
    <property type="entry name" value="AAA_2"/>
    <property type="match status" value="1"/>
</dbReference>
<dbReference type="Pfam" id="PF10431">
    <property type="entry name" value="ClpB_D2-small"/>
    <property type="match status" value="1"/>
</dbReference>
<dbReference type="Pfam" id="PF06689">
    <property type="entry name" value="zf-C4_ClpX"/>
    <property type="match status" value="1"/>
</dbReference>
<dbReference type="SMART" id="SM00382">
    <property type="entry name" value="AAA"/>
    <property type="match status" value="1"/>
</dbReference>
<dbReference type="SMART" id="SM01086">
    <property type="entry name" value="ClpB_D2-small"/>
    <property type="match status" value="1"/>
</dbReference>
<dbReference type="SMART" id="SM00994">
    <property type="entry name" value="zf-C4_ClpX"/>
    <property type="match status" value="1"/>
</dbReference>
<dbReference type="SUPFAM" id="SSF57716">
    <property type="entry name" value="Glucocorticoid receptor-like (DNA-binding domain)"/>
    <property type="match status" value="1"/>
</dbReference>
<dbReference type="SUPFAM" id="SSF52540">
    <property type="entry name" value="P-loop containing nucleoside triphosphate hydrolases"/>
    <property type="match status" value="1"/>
</dbReference>
<dbReference type="PROSITE" id="PS51902">
    <property type="entry name" value="CLPX_ZB"/>
    <property type="match status" value="1"/>
</dbReference>
<evidence type="ECO:0000255" key="1">
    <source>
        <dbReference type="HAMAP-Rule" id="MF_00175"/>
    </source>
</evidence>
<evidence type="ECO:0000255" key="2">
    <source>
        <dbReference type="PROSITE-ProRule" id="PRU01250"/>
    </source>
</evidence>
<accession>C3JYJ9</accession>
<proteinExistence type="inferred from homology"/>
<sequence>MTDTRNGEDNGKLLYCSFCGKSQHEVRKLIAGPSVFICDECVDLCNDIIREEVQEAQAESSAHKLPSPKEISGILDQYVIGQERAKKVLAVAVYNHYKRLNQRDKKGDEVELGKSNILLIGPTGSGKTLLAETLARLLNVPFTIADATTLTEAGYVGEDVENIIQKLLQKCDYDVEKAQMGIVYIDEIDKISRKSDNPSITRDVSGEGVQQALLKLIEGTVASVPPQGGRKHPQQEFLQVDTRNILFICGGAFSGLEKVIQQRSTRGGIGFSAEVRSKEEGKKVGESLREVEPDDLVKFGLIPEFVGRLPVLATLDELDEAALIQILTEPKNALTKQYAKLFEMEGVDLEFRTDALKSVAKRALERKTGARGLRSILEGVLLDTMYEIPSQSEVSKVVIDESVIEGKSKPLYIYENSEPTAKAAPDA</sequence>
<gene>
    <name evidence="1" type="primary">clpX</name>
    <name type="ordered locus">PFLU_3928</name>
</gene>
<name>CLPX_PSEFS</name>
<reference key="1">
    <citation type="journal article" date="2009" name="Genome Biol.">
        <title>Genomic and genetic analyses of diversity and plant interactions of Pseudomonas fluorescens.</title>
        <authorList>
            <person name="Silby M.W."/>
            <person name="Cerdeno-Tarraga A.M."/>
            <person name="Vernikos G.S."/>
            <person name="Giddens S.R."/>
            <person name="Jackson R.W."/>
            <person name="Preston G.M."/>
            <person name="Zhang X.-X."/>
            <person name="Moon C.D."/>
            <person name="Gehrig S.M."/>
            <person name="Godfrey S.A.C."/>
            <person name="Knight C.G."/>
            <person name="Malone J.G."/>
            <person name="Robinson Z."/>
            <person name="Spiers A.J."/>
            <person name="Harris S."/>
            <person name="Challis G.L."/>
            <person name="Yaxley A.M."/>
            <person name="Harris D."/>
            <person name="Seeger K."/>
            <person name="Murphy L."/>
            <person name="Rutter S."/>
            <person name="Squares R."/>
            <person name="Quail M.A."/>
            <person name="Saunders E."/>
            <person name="Mavromatis K."/>
            <person name="Brettin T.S."/>
            <person name="Bentley S.D."/>
            <person name="Hothersall J."/>
            <person name="Stephens E."/>
            <person name="Thomas C.M."/>
            <person name="Parkhill J."/>
            <person name="Levy S.B."/>
            <person name="Rainey P.B."/>
            <person name="Thomson N.R."/>
        </authorList>
    </citation>
    <scope>NUCLEOTIDE SEQUENCE [LARGE SCALE GENOMIC DNA]</scope>
    <source>
        <strain>SBW25</strain>
    </source>
</reference>
<keyword id="KW-0067">ATP-binding</keyword>
<keyword id="KW-0143">Chaperone</keyword>
<keyword id="KW-0479">Metal-binding</keyword>
<keyword id="KW-0547">Nucleotide-binding</keyword>
<keyword id="KW-0862">Zinc</keyword>
<organism>
    <name type="scientific">Pseudomonas fluorescens (strain SBW25)</name>
    <dbReference type="NCBI Taxonomy" id="216595"/>
    <lineage>
        <taxon>Bacteria</taxon>
        <taxon>Pseudomonadati</taxon>
        <taxon>Pseudomonadota</taxon>
        <taxon>Gammaproteobacteria</taxon>
        <taxon>Pseudomonadales</taxon>
        <taxon>Pseudomonadaceae</taxon>
        <taxon>Pseudomonas</taxon>
    </lineage>
</organism>
<protein>
    <recommendedName>
        <fullName evidence="1">ATP-dependent Clp protease ATP-binding subunit ClpX</fullName>
    </recommendedName>
</protein>
<comment type="function">
    <text evidence="1">ATP-dependent specificity component of the Clp protease. It directs the protease to specific substrates. Can perform chaperone functions in the absence of ClpP.</text>
</comment>
<comment type="subunit">
    <text evidence="1">Component of the ClpX-ClpP complex. Forms a hexameric ring that, in the presence of ATP, binds to fourteen ClpP subunits assembled into a disk-like structure with a central cavity, resembling the structure of eukaryotic proteasomes.</text>
</comment>
<comment type="similarity">
    <text evidence="1">Belongs to the ClpX chaperone family.</text>
</comment>
<feature type="chain" id="PRO_1000203739" description="ATP-dependent Clp protease ATP-binding subunit ClpX">
    <location>
        <begin position="1"/>
        <end position="427"/>
    </location>
</feature>
<feature type="domain" description="ClpX-type ZB" evidence="2">
    <location>
        <begin position="4"/>
        <end position="57"/>
    </location>
</feature>
<feature type="binding site" evidence="2">
    <location>
        <position position="16"/>
    </location>
    <ligand>
        <name>Zn(2+)</name>
        <dbReference type="ChEBI" id="CHEBI:29105"/>
    </ligand>
</feature>
<feature type="binding site" evidence="2">
    <location>
        <position position="19"/>
    </location>
    <ligand>
        <name>Zn(2+)</name>
        <dbReference type="ChEBI" id="CHEBI:29105"/>
    </ligand>
</feature>
<feature type="binding site" evidence="2">
    <location>
        <position position="38"/>
    </location>
    <ligand>
        <name>Zn(2+)</name>
        <dbReference type="ChEBI" id="CHEBI:29105"/>
    </ligand>
</feature>
<feature type="binding site" evidence="2">
    <location>
        <position position="41"/>
    </location>
    <ligand>
        <name>Zn(2+)</name>
        <dbReference type="ChEBI" id="CHEBI:29105"/>
    </ligand>
</feature>
<feature type="binding site" evidence="1">
    <location>
        <begin position="122"/>
        <end position="129"/>
    </location>
    <ligand>
        <name>ATP</name>
        <dbReference type="ChEBI" id="CHEBI:30616"/>
    </ligand>
</feature>